<protein>
    <recommendedName>
        <fullName>Uncharacterized protein C44B7.5</fullName>
    </recommendedName>
</protein>
<gene>
    <name type="ORF">C44B7.5</name>
</gene>
<sequence length="236" mass="26301">MRKKHFNMILKLALISSLLALAASRTHLTDCLDDHKYCVGLPRGCVGTECNFAFSSISNGTHTEIEIFGNSVIDKTWLAIGYSADKKMEDDFVVFCIRDDAGTNMNKLDQMAGLAYNGKHSNEMTGTIENIKKNKNDKFGLDLEMKEYEKDEQTLYCKMAHRVEPIIDRFNVSKVEILMAKGTWMKGGLSYHGNTRNNTGIIDLSGESKHKRKNSAVGSLALVSSAITFLAAKMLF</sequence>
<accession>Q18594</accession>
<proteinExistence type="evidence at protein level"/>
<comment type="subcellular location">
    <subcellularLocation>
        <location evidence="4">Secreted</location>
    </subcellularLocation>
</comment>
<name>YC4B5_CAEEL</name>
<evidence type="ECO:0000255" key="1"/>
<evidence type="ECO:0000269" key="2">
    <source>
    </source>
</evidence>
<evidence type="ECO:0000269" key="3">
    <source>
    </source>
</evidence>
<evidence type="ECO:0000305" key="4"/>
<dbReference type="EMBL" id="FO080141">
    <property type="protein sequence ID" value="CCD61558.1"/>
    <property type="molecule type" value="Genomic_DNA"/>
</dbReference>
<dbReference type="PIR" id="T15798">
    <property type="entry name" value="T15798"/>
</dbReference>
<dbReference type="RefSeq" id="NP_495404.1">
    <property type="nucleotide sequence ID" value="NM_063003.6"/>
</dbReference>
<dbReference type="BioGRID" id="39462">
    <property type="interactions" value="4"/>
</dbReference>
<dbReference type="DIP" id="DIP-25775N"/>
<dbReference type="FunCoup" id="Q18594">
    <property type="interactions" value="1522"/>
</dbReference>
<dbReference type="STRING" id="6239.C44B7.5.1"/>
<dbReference type="iPTMnet" id="Q18594"/>
<dbReference type="PaxDb" id="6239-C44B7.5"/>
<dbReference type="PeptideAtlas" id="Q18594"/>
<dbReference type="EnsemblMetazoa" id="C44B7.5.1">
    <property type="protein sequence ID" value="C44B7.5.1"/>
    <property type="gene ID" value="WBGene00016627"/>
</dbReference>
<dbReference type="GeneID" id="174124"/>
<dbReference type="KEGG" id="cel:CELE_C44B7.5"/>
<dbReference type="UCSC" id="C44B7.5">
    <property type="organism name" value="c. elegans"/>
</dbReference>
<dbReference type="AGR" id="WB:WBGene00016627"/>
<dbReference type="CTD" id="174124"/>
<dbReference type="WormBase" id="C44B7.5">
    <property type="protein sequence ID" value="CE02543"/>
    <property type="gene ID" value="WBGene00016627"/>
</dbReference>
<dbReference type="eggNOG" id="KOG4293">
    <property type="taxonomic scope" value="Eukaryota"/>
</dbReference>
<dbReference type="GeneTree" id="ENSGT00940000174387"/>
<dbReference type="HOGENOM" id="CLU_105994_0_0_1"/>
<dbReference type="InParanoid" id="Q18594"/>
<dbReference type="OMA" id="YCKMTHR"/>
<dbReference type="OrthoDB" id="5801696at2759"/>
<dbReference type="PhylomeDB" id="Q18594"/>
<dbReference type="PRO" id="PR:Q18594"/>
<dbReference type="Proteomes" id="UP000001940">
    <property type="component" value="Chromosome II"/>
</dbReference>
<dbReference type="Bgee" id="WBGene00016627">
    <property type="expression patterns" value="Expressed in adult organism and 2 other cell types or tissues"/>
</dbReference>
<dbReference type="GO" id="GO:0005576">
    <property type="term" value="C:extracellular region"/>
    <property type="evidence" value="ECO:0007669"/>
    <property type="project" value="UniProtKB-SubCell"/>
</dbReference>
<dbReference type="CDD" id="cd09628">
    <property type="entry name" value="DOMON_SDR_2_like"/>
    <property type="match status" value="1"/>
</dbReference>
<organism>
    <name type="scientific">Caenorhabditis elegans</name>
    <dbReference type="NCBI Taxonomy" id="6239"/>
    <lineage>
        <taxon>Eukaryota</taxon>
        <taxon>Metazoa</taxon>
        <taxon>Ecdysozoa</taxon>
        <taxon>Nematoda</taxon>
        <taxon>Chromadorea</taxon>
        <taxon>Rhabditida</taxon>
        <taxon>Rhabditina</taxon>
        <taxon>Rhabditomorpha</taxon>
        <taxon>Rhabditoidea</taxon>
        <taxon>Rhabditidae</taxon>
        <taxon>Peloderinae</taxon>
        <taxon>Caenorhabditis</taxon>
    </lineage>
</organism>
<reference key="1">
    <citation type="journal article" date="1998" name="Science">
        <title>Genome sequence of the nematode C. elegans: a platform for investigating biology.</title>
        <authorList>
            <consortium name="The C. elegans sequencing consortium"/>
        </authorList>
    </citation>
    <scope>NUCLEOTIDE SEQUENCE [LARGE SCALE GENOMIC DNA]</scope>
    <source>
        <strain>Bristol N2</strain>
    </source>
</reference>
<reference key="2">
    <citation type="journal article" date="2003" name="Nat. Biotechnol.">
        <title>Lectin affinity capture, isotope-coded tagging and mass spectrometry to identify N-linked glycoproteins.</title>
        <authorList>
            <person name="Kaji H."/>
            <person name="Saito H."/>
            <person name="Yamauchi Y."/>
            <person name="Shinkawa T."/>
            <person name="Taoka M."/>
            <person name="Hirabayashi J."/>
            <person name="Kasai K."/>
            <person name="Takahashi N."/>
            <person name="Isobe T."/>
        </authorList>
    </citation>
    <scope>GLYCOSYLATION [LARGE SCALE ANALYSIS] AT ASN-171</scope>
    <scope>IDENTIFICATION BY MASS SPECTROMETRY</scope>
    <source>
        <strain>Bristol N2</strain>
    </source>
</reference>
<reference key="3">
    <citation type="journal article" date="2007" name="Mol. Cell. Proteomics">
        <title>Proteomics reveals N-linked glycoprotein diversity in Caenorhabditis elegans and suggests an atypical translocation mechanism for integral membrane proteins.</title>
        <authorList>
            <person name="Kaji H."/>
            <person name="Kamiie J."/>
            <person name="Kawakami H."/>
            <person name="Kido K."/>
            <person name="Yamauchi Y."/>
            <person name="Shinkawa T."/>
            <person name="Taoka M."/>
            <person name="Takahashi N."/>
            <person name="Isobe T."/>
        </authorList>
    </citation>
    <scope>GLYCOSYLATION [LARGE SCALE ANALYSIS] AT ASN-171 AND ASN-197</scope>
    <scope>IDENTIFICATION BY MASS SPECTROMETRY</scope>
    <source>
        <strain>Bristol N2</strain>
    </source>
</reference>
<keyword id="KW-0325">Glycoprotein</keyword>
<keyword id="KW-1185">Reference proteome</keyword>
<keyword id="KW-0964">Secreted</keyword>
<keyword id="KW-0732">Signal</keyword>
<feature type="signal peptide" evidence="1">
    <location>
        <begin position="1"/>
        <end position="24"/>
    </location>
</feature>
<feature type="chain" id="PRO_0000250571" description="Uncharacterized protein C44B7.5">
    <location>
        <begin position="25"/>
        <end position="236"/>
    </location>
</feature>
<feature type="glycosylation site" description="N-linked (GlcNAc...) asparagine" evidence="1">
    <location>
        <position position="59"/>
    </location>
</feature>
<feature type="glycosylation site" description="N-linked (GlcNAc...) asparagine" evidence="2 3">
    <location>
        <position position="171"/>
    </location>
</feature>
<feature type="glycosylation site" description="N-linked (GlcNAc...) asparagine" evidence="3">
    <location>
        <position position="197"/>
    </location>
</feature>